<gene>
    <name evidence="1" type="primary">rplK</name>
    <name type="ordered locus">Rru_A2699</name>
</gene>
<feature type="chain" id="PRO_0000258202" description="Large ribosomal subunit protein uL11">
    <location>
        <begin position="1"/>
        <end position="142"/>
    </location>
</feature>
<name>RL11_RHORT</name>
<organism>
    <name type="scientific">Rhodospirillum rubrum (strain ATCC 11170 / ATH 1.1.1 / DSM 467 / LMG 4362 / NCIMB 8255 / S1)</name>
    <dbReference type="NCBI Taxonomy" id="269796"/>
    <lineage>
        <taxon>Bacteria</taxon>
        <taxon>Pseudomonadati</taxon>
        <taxon>Pseudomonadota</taxon>
        <taxon>Alphaproteobacteria</taxon>
        <taxon>Rhodospirillales</taxon>
        <taxon>Rhodospirillaceae</taxon>
        <taxon>Rhodospirillum</taxon>
    </lineage>
</organism>
<accession>Q2RQU9</accession>
<sequence>MAKKIIGYIKLQVPAGKANPSPPIGPALGQRGLNIMEFCKAFNAATQGLEPGMPIPVVITAYGDRTFTYITKTPPMTYFLKKAAGIGKGSTTPGKGSAGTVTMEQVRDIAEKKMPDLNSPTIEAAVQMVVGSARSMGLQVVE</sequence>
<keyword id="KW-0488">Methylation</keyword>
<keyword id="KW-1185">Reference proteome</keyword>
<keyword id="KW-0687">Ribonucleoprotein</keyword>
<keyword id="KW-0689">Ribosomal protein</keyword>
<keyword id="KW-0694">RNA-binding</keyword>
<keyword id="KW-0699">rRNA-binding</keyword>
<reference key="1">
    <citation type="journal article" date="2011" name="Stand. Genomic Sci.">
        <title>Complete genome sequence of Rhodospirillum rubrum type strain (S1).</title>
        <authorList>
            <person name="Munk A.C."/>
            <person name="Copeland A."/>
            <person name="Lucas S."/>
            <person name="Lapidus A."/>
            <person name="Del Rio T.G."/>
            <person name="Barry K."/>
            <person name="Detter J.C."/>
            <person name="Hammon N."/>
            <person name="Israni S."/>
            <person name="Pitluck S."/>
            <person name="Brettin T."/>
            <person name="Bruce D."/>
            <person name="Han C."/>
            <person name="Tapia R."/>
            <person name="Gilna P."/>
            <person name="Schmutz J."/>
            <person name="Larimer F."/>
            <person name="Land M."/>
            <person name="Kyrpides N.C."/>
            <person name="Mavromatis K."/>
            <person name="Richardson P."/>
            <person name="Rohde M."/>
            <person name="Goeker M."/>
            <person name="Klenk H.P."/>
            <person name="Zhang Y."/>
            <person name="Roberts G.P."/>
            <person name="Reslewic S."/>
            <person name="Schwartz D.C."/>
        </authorList>
    </citation>
    <scope>NUCLEOTIDE SEQUENCE [LARGE SCALE GENOMIC DNA]</scope>
    <source>
        <strain>ATCC 11170 / ATH 1.1.1 / DSM 467 / LMG 4362 / NCIMB 8255 / S1</strain>
    </source>
</reference>
<proteinExistence type="inferred from homology"/>
<protein>
    <recommendedName>
        <fullName evidence="1">Large ribosomal subunit protein uL11</fullName>
    </recommendedName>
    <alternativeName>
        <fullName evidence="2">50S ribosomal protein L11</fullName>
    </alternativeName>
</protein>
<comment type="function">
    <text evidence="1">Forms part of the ribosomal stalk which helps the ribosome interact with GTP-bound translation factors.</text>
</comment>
<comment type="subunit">
    <text evidence="1">Part of the ribosomal stalk of the 50S ribosomal subunit. Interacts with L10 and the large rRNA to form the base of the stalk. L10 forms an elongated spine to which L12 dimers bind in a sequential fashion forming a multimeric L10(L12)X complex.</text>
</comment>
<comment type="PTM">
    <text evidence="1">One or more lysine residues are methylated.</text>
</comment>
<comment type="similarity">
    <text evidence="1">Belongs to the universal ribosomal protein uL11 family.</text>
</comment>
<dbReference type="EMBL" id="CP000230">
    <property type="protein sequence ID" value="ABC23496.1"/>
    <property type="molecule type" value="Genomic_DNA"/>
</dbReference>
<dbReference type="RefSeq" id="WP_011390509.1">
    <property type="nucleotide sequence ID" value="NC_007643.1"/>
</dbReference>
<dbReference type="RefSeq" id="YP_427783.1">
    <property type="nucleotide sequence ID" value="NC_007643.1"/>
</dbReference>
<dbReference type="SMR" id="Q2RQU9"/>
<dbReference type="STRING" id="269796.Rru_A2699"/>
<dbReference type="EnsemblBacteria" id="ABC23496">
    <property type="protein sequence ID" value="ABC23496"/>
    <property type="gene ID" value="Rru_A2699"/>
</dbReference>
<dbReference type="KEGG" id="rru:Rru_A2699"/>
<dbReference type="PATRIC" id="fig|269796.9.peg.2808"/>
<dbReference type="eggNOG" id="COG0080">
    <property type="taxonomic scope" value="Bacteria"/>
</dbReference>
<dbReference type="HOGENOM" id="CLU_074237_2_1_5"/>
<dbReference type="PhylomeDB" id="Q2RQU9"/>
<dbReference type="Proteomes" id="UP000001929">
    <property type="component" value="Chromosome"/>
</dbReference>
<dbReference type="GO" id="GO:0022625">
    <property type="term" value="C:cytosolic large ribosomal subunit"/>
    <property type="evidence" value="ECO:0007669"/>
    <property type="project" value="TreeGrafter"/>
</dbReference>
<dbReference type="GO" id="GO:0070180">
    <property type="term" value="F:large ribosomal subunit rRNA binding"/>
    <property type="evidence" value="ECO:0007669"/>
    <property type="project" value="UniProtKB-UniRule"/>
</dbReference>
<dbReference type="GO" id="GO:0003735">
    <property type="term" value="F:structural constituent of ribosome"/>
    <property type="evidence" value="ECO:0007669"/>
    <property type="project" value="InterPro"/>
</dbReference>
<dbReference type="GO" id="GO:0006412">
    <property type="term" value="P:translation"/>
    <property type="evidence" value="ECO:0007669"/>
    <property type="project" value="UniProtKB-UniRule"/>
</dbReference>
<dbReference type="CDD" id="cd00349">
    <property type="entry name" value="Ribosomal_L11"/>
    <property type="match status" value="1"/>
</dbReference>
<dbReference type="FunFam" id="1.10.10.250:FF:000001">
    <property type="entry name" value="50S ribosomal protein L11"/>
    <property type="match status" value="1"/>
</dbReference>
<dbReference type="FunFam" id="3.30.1550.10:FF:000001">
    <property type="entry name" value="50S ribosomal protein L11"/>
    <property type="match status" value="1"/>
</dbReference>
<dbReference type="Gene3D" id="1.10.10.250">
    <property type="entry name" value="Ribosomal protein L11, C-terminal domain"/>
    <property type="match status" value="1"/>
</dbReference>
<dbReference type="Gene3D" id="3.30.1550.10">
    <property type="entry name" value="Ribosomal protein L11/L12, N-terminal domain"/>
    <property type="match status" value="1"/>
</dbReference>
<dbReference type="HAMAP" id="MF_00736">
    <property type="entry name" value="Ribosomal_uL11"/>
    <property type="match status" value="1"/>
</dbReference>
<dbReference type="InterPro" id="IPR000911">
    <property type="entry name" value="Ribosomal_uL11"/>
</dbReference>
<dbReference type="InterPro" id="IPR006519">
    <property type="entry name" value="Ribosomal_uL11_bac-typ"/>
</dbReference>
<dbReference type="InterPro" id="IPR020783">
    <property type="entry name" value="Ribosomal_uL11_C"/>
</dbReference>
<dbReference type="InterPro" id="IPR036769">
    <property type="entry name" value="Ribosomal_uL11_C_sf"/>
</dbReference>
<dbReference type="InterPro" id="IPR020784">
    <property type="entry name" value="Ribosomal_uL11_N"/>
</dbReference>
<dbReference type="InterPro" id="IPR036796">
    <property type="entry name" value="Ribosomal_uL11_N_sf"/>
</dbReference>
<dbReference type="NCBIfam" id="TIGR01632">
    <property type="entry name" value="L11_bact"/>
    <property type="match status" value="1"/>
</dbReference>
<dbReference type="PANTHER" id="PTHR11661">
    <property type="entry name" value="60S RIBOSOMAL PROTEIN L12"/>
    <property type="match status" value="1"/>
</dbReference>
<dbReference type="PANTHER" id="PTHR11661:SF1">
    <property type="entry name" value="LARGE RIBOSOMAL SUBUNIT PROTEIN UL11M"/>
    <property type="match status" value="1"/>
</dbReference>
<dbReference type="Pfam" id="PF00298">
    <property type="entry name" value="Ribosomal_L11"/>
    <property type="match status" value="1"/>
</dbReference>
<dbReference type="Pfam" id="PF03946">
    <property type="entry name" value="Ribosomal_L11_N"/>
    <property type="match status" value="1"/>
</dbReference>
<dbReference type="SMART" id="SM00649">
    <property type="entry name" value="RL11"/>
    <property type="match status" value="1"/>
</dbReference>
<dbReference type="SUPFAM" id="SSF54747">
    <property type="entry name" value="Ribosomal L11/L12e N-terminal domain"/>
    <property type="match status" value="1"/>
</dbReference>
<dbReference type="SUPFAM" id="SSF46906">
    <property type="entry name" value="Ribosomal protein L11, C-terminal domain"/>
    <property type="match status" value="1"/>
</dbReference>
<evidence type="ECO:0000255" key="1">
    <source>
        <dbReference type="HAMAP-Rule" id="MF_00736"/>
    </source>
</evidence>
<evidence type="ECO:0000305" key="2"/>